<dbReference type="EC" id="4.3.2.10" evidence="1"/>
<dbReference type="EC" id="3.5.1.2" evidence="1"/>
<dbReference type="EMBL" id="BX640436">
    <property type="protein sequence ID" value="CAE39549.1"/>
    <property type="molecule type" value="Genomic_DNA"/>
</dbReference>
<dbReference type="RefSeq" id="WP_003815798.1">
    <property type="nucleotide sequence ID" value="NC_002928.3"/>
</dbReference>
<dbReference type="SMR" id="Q7W2Y1"/>
<dbReference type="GeneID" id="93206067"/>
<dbReference type="KEGG" id="bpa:BPP4270"/>
<dbReference type="HOGENOM" id="CLU_071837_2_0_4"/>
<dbReference type="UniPathway" id="UPA00031">
    <property type="reaction ID" value="UER00010"/>
</dbReference>
<dbReference type="Proteomes" id="UP000001421">
    <property type="component" value="Chromosome"/>
</dbReference>
<dbReference type="GO" id="GO:0005737">
    <property type="term" value="C:cytoplasm"/>
    <property type="evidence" value="ECO:0007669"/>
    <property type="project" value="UniProtKB-SubCell"/>
</dbReference>
<dbReference type="GO" id="GO:0004359">
    <property type="term" value="F:glutaminase activity"/>
    <property type="evidence" value="ECO:0007669"/>
    <property type="project" value="UniProtKB-EC"/>
</dbReference>
<dbReference type="GO" id="GO:0000107">
    <property type="term" value="F:imidazoleglycerol-phosphate synthase activity"/>
    <property type="evidence" value="ECO:0007669"/>
    <property type="project" value="UniProtKB-UniRule"/>
</dbReference>
<dbReference type="GO" id="GO:0016829">
    <property type="term" value="F:lyase activity"/>
    <property type="evidence" value="ECO:0007669"/>
    <property type="project" value="UniProtKB-KW"/>
</dbReference>
<dbReference type="GO" id="GO:0000105">
    <property type="term" value="P:L-histidine biosynthetic process"/>
    <property type="evidence" value="ECO:0007669"/>
    <property type="project" value="UniProtKB-UniRule"/>
</dbReference>
<dbReference type="CDD" id="cd01748">
    <property type="entry name" value="GATase1_IGP_Synthase"/>
    <property type="match status" value="1"/>
</dbReference>
<dbReference type="Gene3D" id="3.40.50.880">
    <property type="match status" value="1"/>
</dbReference>
<dbReference type="HAMAP" id="MF_00278">
    <property type="entry name" value="HisH"/>
    <property type="match status" value="1"/>
</dbReference>
<dbReference type="InterPro" id="IPR029062">
    <property type="entry name" value="Class_I_gatase-like"/>
</dbReference>
<dbReference type="InterPro" id="IPR017926">
    <property type="entry name" value="GATASE"/>
</dbReference>
<dbReference type="InterPro" id="IPR010139">
    <property type="entry name" value="Imidazole-glycPsynth_HisH"/>
</dbReference>
<dbReference type="NCBIfam" id="TIGR01855">
    <property type="entry name" value="IMP_synth_hisH"/>
    <property type="match status" value="1"/>
</dbReference>
<dbReference type="PANTHER" id="PTHR42701">
    <property type="entry name" value="IMIDAZOLE GLYCEROL PHOSPHATE SYNTHASE SUBUNIT HISH"/>
    <property type="match status" value="1"/>
</dbReference>
<dbReference type="PANTHER" id="PTHR42701:SF2">
    <property type="entry name" value="IMIDAZOLE GLYCEROL PHOSPHATE SYNTHASE SUBUNIT HISH 1"/>
    <property type="match status" value="1"/>
</dbReference>
<dbReference type="Pfam" id="PF00117">
    <property type="entry name" value="GATase"/>
    <property type="match status" value="1"/>
</dbReference>
<dbReference type="PIRSF" id="PIRSF000495">
    <property type="entry name" value="Amidotransf_hisH"/>
    <property type="match status" value="1"/>
</dbReference>
<dbReference type="SUPFAM" id="SSF52317">
    <property type="entry name" value="Class I glutamine amidotransferase-like"/>
    <property type="match status" value="1"/>
</dbReference>
<dbReference type="PROSITE" id="PS51273">
    <property type="entry name" value="GATASE_TYPE_1"/>
    <property type="match status" value="1"/>
</dbReference>
<gene>
    <name evidence="1" type="primary">hisH</name>
    <name type="ordered locus">BPP4270</name>
</gene>
<organism>
    <name type="scientific">Bordetella parapertussis (strain 12822 / ATCC BAA-587 / NCTC 13253)</name>
    <dbReference type="NCBI Taxonomy" id="257311"/>
    <lineage>
        <taxon>Bacteria</taxon>
        <taxon>Pseudomonadati</taxon>
        <taxon>Pseudomonadota</taxon>
        <taxon>Betaproteobacteria</taxon>
        <taxon>Burkholderiales</taxon>
        <taxon>Alcaligenaceae</taxon>
        <taxon>Bordetella</taxon>
    </lineage>
</organism>
<proteinExistence type="inferred from homology"/>
<comment type="function">
    <text evidence="1">IGPS catalyzes the conversion of PRFAR and glutamine to IGP, AICAR and glutamate. The HisH subunit catalyzes the hydrolysis of glutamine to glutamate and ammonia as part of the synthesis of IGP and AICAR. The resulting ammonia molecule is channeled to the active site of HisF.</text>
</comment>
<comment type="catalytic activity">
    <reaction evidence="1">
        <text>5-[(5-phospho-1-deoxy-D-ribulos-1-ylimino)methylamino]-1-(5-phospho-beta-D-ribosyl)imidazole-4-carboxamide + L-glutamine = D-erythro-1-(imidazol-4-yl)glycerol 3-phosphate + 5-amino-1-(5-phospho-beta-D-ribosyl)imidazole-4-carboxamide + L-glutamate + H(+)</text>
        <dbReference type="Rhea" id="RHEA:24793"/>
        <dbReference type="ChEBI" id="CHEBI:15378"/>
        <dbReference type="ChEBI" id="CHEBI:29985"/>
        <dbReference type="ChEBI" id="CHEBI:58278"/>
        <dbReference type="ChEBI" id="CHEBI:58359"/>
        <dbReference type="ChEBI" id="CHEBI:58475"/>
        <dbReference type="ChEBI" id="CHEBI:58525"/>
        <dbReference type="EC" id="4.3.2.10"/>
    </reaction>
</comment>
<comment type="catalytic activity">
    <reaction evidence="1">
        <text>L-glutamine + H2O = L-glutamate + NH4(+)</text>
        <dbReference type="Rhea" id="RHEA:15889"/>
        <dbReference type="ChEBI" id="CHEBI:15377"/>
        <dbReference type="ChEBI" id="CHEBI:28938"/>
        <dbReference type="ChEBI" id="CHEBI:29985"/>
        <dbReference type="ChEBI" id="CHEBI:58359"/>
        <dbReference type="EC" id="3.5.1.2"/>
    </reaction>
</comment>
<comment type="pathway">
    <text evidence="1">Amino-acid biosynthesis; L-histidine biosynthesis; L-histidine from 5-phospho-alpha-D-ribose 1-diphosphate: step 5/9.</text>
</comment>
<comment type="subunit">
    <text evidence="1">Heterodimer of HisH and HisF.</text>
</comment>
<comment type="subcellular location">
    <subcellularLocation>
        <location evidence="1">Cytoplasm</location>
    </subcellularLocation>
</comment>
<accession>Q7W2Y1</accession>
<sequence length="225" mass="24457">MSTIAIVDYGMGNFHSVARALQHAAPDADIRICNRPEQIDAADRVVFPGQGAMPDCMRTLNESGLRAAVERAAASKPLMGVCVGEQMLFERSEEGDTPCLGIFPGEVRRFAGPQFADPVAADQAAAAPPAAARERLKVPHMGWNQVRQTRSHALWEGIPDGTHFYFVHSYYAAPSDPALTTGVTDYGVAFTCAVAAANIFAVQFHPEKSAEHGLRLYRNFVDWQP</sequence>
<reference key="1">
    <citation type="journal article" date="2003" name="Nat. Genet.">
        <title>Comparative analysis of the genome sequences of Bordetella pertussis, Bordetella parapertussis and Bordetella bronchiseptica.</title>
        <authorList>
            <person name="Parkhill J."/>
            <person name="Sebaihia M."/>
            <person name="Preston A."/>
            <person name="Murphy L.D."/>
            <person name="Thomson N.R."/>
            <person name="Harris D.E."/>
            <person name="Holden M.T.G."/>
            <person name="Churcher C.M."/>
            <person name="Bentley S.D."/>
            <person name="Mungall K.L."/>
            <person name="Cerdeno-Tarraga A.-M."/>
            <person name="Temple L."/>
            <person name="James K.D."/>
            <person name="Harris B."/>
            <person name="Quail M.A."/>
            <person name="Achtman M."/>
            <person name="Atkin R."/>
            <person name="Baker S."/>
            <person name="Basham D."/>
            <person name="Bason N."/>
            <person name="Cherevach I."/>
            <person name="Chillingworth T."/>
            <person name="Collins M."/>
            <person name="Cronin A."/>
            <person name="Davis P."/>
            <person name="Doggett J."/>
            <person name="Feltwell T."/>
            <person name="Goble A."/>
            <person name="Hamlin N."/>
            <person name="Hauser H."/>
            <person name="Holroyd S."/>
            <person name="Jagels K."/>
            <person name="Leather S."/>
            <person name="Moule S."/>
            <person name="Norberczak H."/>
            <person name="O'Neil S."/>
            <person name="Ormond D."/>
            <person name="Price C."/>
            <person name="Rabbinowitsch E."/>
            <person name="Rutter S."/>
            <person name="Sanders M."/>
            <person name="Saunders D."/>
            <person name="Seeger K."/>
            <person name="Sharp S."/>
            <person name="Simmonds M."/>
            <person name="Skelton J."/>
            <person name="Squares R."/>
            <person name="Squares S."/>
            <person name="Stevens K."/>
            <person name="Unwin L."/>
            <person name="Whitehead S."/>
            <person name="Barrell B.G."/>
            <person name="Maskell D.J."/>
        </authorList>
    </citation>
    <scope>NUCLEOTIDE SEQUENCE [LARGE SCALE GENOMIC DNA]</scope>
    <source>
        <strain>12822 / ATCC BAA-587 / NCTC 13253</strain>
    </source>
</reference>
<name>HIS5_BORPA</name>
<protein>
    <recommendedName>
        <fullName evidence="1">Imidazole glycerol phosphate synthase subunit HisH</fullName>
        <ecNumber evidence="1">4.3.2.10</ecNumber>
    </recommendedName>
    <alternativeName>
        <fullName evidence="1">IGP synthase glutaminase subunit</fullName>
        <ecNumber evidence="1">3.5.1.2</ecNumber>
    </alternativeName>
    <alternativeName>
        <fullName evidence="1">IGP synthase subunit HisH</fullName>
    </alternativeName>
    <alternativeName>
        <fullName evidence="1">ImGP synthase subunit HisH</fullName>
        <shortName evidence="1">IGPS subunit HisH</shortName>
    </alternativeName>
</protein>
<keyword id="KW-0028">Amino-acid biosynthesis</keyword>
<keyword id="KW-0963">Cytoplasm</keyword>
<keyword id="KW-0315">Glutamine amidotransferase</keyword>
<keyword id="KW-0368">Histidine biosynthesis</keyword>
<keyword id="KW-0378">Hydrolase</keyword>
<keyword id="KW-0456">Lyase</keyword>
<evidence type="ECO:0000255" key="1">
    <source>
        <dbReference type="HAMAP-Rule" id="MF_00278"/>
    </source>
</evidence>
<feature type="chain" id="PRO_0000152349" description="Imidazole glycerol phosphate synthase subunit HisH">
    <location>
        <begin position="1"/>
        <end position="225"/>
    </location>
</feature>
<feature type="domain" description="Glutamine amidotransferase type-1" evidence="1">
    <location>
        <begin position="3"/>
        <end position="225"/>
    </location>
</feature>
<feature type="active site" description="Nucleophile" evidence="1">
    <location>
        <position position="82"/>
    </location>
</feature>
<feature type="active site" evidence="1">
    <location>
        <position position="205"/>
    </location>
</feature>
<feature type="active site" evidence="1">
    <location>
        <position position="207"/>
    </location>
</feature>